<feature type="signal peptide" evidence="1">
    <location>
        <begin position="1"/>
        <end position="19"/>
    </location>
</feature>
<feature type="chain" id="PRO_0000033467" description="Outer membrane protein assembly factor BamA">
    <location>
        <begin position="20"/>
        <end position="797"/>
    </location>
</feature>
<feature type="domain" description="POTRA 1" evidence="2">
    <location>
        <begin position="22"/>
        <end position="89"/>
    </location>
</feature>
<feature type="domain" description="POTRA 2" evidence="2">
    <location>
        <begin position="90"/>
        <end position="170"/>
    </location>
</feature>
<feature type="domain" description="POTRA 3" evidence="2">
    <location>
        <begin position="173"/>
        <end position="259"/>
    </location>
</feature>
<feature type="domain" description="POTRA 4" evidence="2">
    <location>
        <begin position="262"/>
        <end position="341"/>
    </location>
</feature>
<feature type="domain" description="POTRA 5" evidence="2">
    <location>
        <begin position="344"/>
        <end position="418"/>
    </location>
</feature>
<feature type="strand" evidence="3">
    <location>
        <begin position="173"/>
        <end position="182"/>
    </location>
</feature>
<feature type="strand" evidence="3">
    <location>
        <begin position="184"/>
        <end position="186"/>
    </location>
</feature>
<feature type="helix" evidence="3">
    <location>
        <begin position="188"/>
        <end position="193"/>
    </location>
</feature>
<feature type="strand" evidence="3">
    <location>
        <begin position="201"/>
        <end position="206"/>
    </location>
</feature>
<feature type="helix" evidence="3">
    <location>
        <begin position="212"/>
        <end position="228"/>
    </location>
</feature>
<feature type="strand" evidence="3">
    <location>
        <begin position="235"/>
        <end position="242"/>
    </location>
</feature>
<feature type="strand" evidence="3">
    <location>
        <begin position="245"/>
        <end position="248"/>
    </location>
</feature>
<feature type="strand" evidence="3">
    <location>
        <begin position="250"/>
        <end position="257"/>
    </location>
</feature>
<feature type="strand" evidence="3">
    <location>
        <begin position="263"/>
        <end position="272"/>
    </location>
</feature>
<feature type="helix" evidence="3">
    <location>
        <begin position="277"/>
        <end position="280"/>
    </location>
</feature>
<feature type="helix" evidence="3">
    <location>
        <begin position="281"/>
        <end position="286"/>
    </location>
</feature>
<feature type="helix" evidence="3">
    <location>
        <begin position="295"/>
        <end position="310"/>
    </location>
</feature>
<feature type="turn" evidence="3">
    <location>
        <begin position="311"/>
        <end position="313"/>
    </location>
</feature>
<feature type="strand" evidence="3">
    <location>
        <begin position="318"/>
        <end position="326"/>
    </location>
</feature>
<feature type="turn" evidence="3">
    <location>
        <begin position="327"/>
        <end position="330"/>
    </location>
</feature>
<feature type="strand" evidence="3">
    <location>
        <begin position="331"/>
        <end position="339"/>
    </location>
</feature>
<feature type="strand" evidence="3">
    <location>
        <begin position="345"/>
        <end position="353"/>
    </location>
</feature>
<feature type="strand" evidence="3">
    <location>
        <begin position="355"/>
        <end position="357"/>
    </location>
</feature>
<feature type="helix" evidence="3">
    <location>
        <begin position="359"/>
        <end position="365"/>
    </location>
</feature>
<feature type="helix" evidence="3">
    <location>
        <begin position="376"/>
        <end position="387"/>
    </location>
</feature>
<feature type="strand" evidence="3">
    <location>
        <begin position="393"/>
        <end position="401"/>
    </location>
</feature>
<feature type="strand" evidence="3">
    <location>
        <begin position="406"/>
        <end position="416"/>
    </location>
</feature>
<sequence length="797" mass="87676">MKKLLIASLLFGTTTTVFAAPFVAKDIRVDGVQGDLEQQIRASLPVRAGQRVTDNDVANIVRSLFVSGRFDDVKAHQEGDVLVVSVVAKSIISDVKIKGNSVIPTEALKQNLDANGFKVGDVLIREKLNEFAKSVKEHYASVGRYNATVEPIVNTLPNNRAEILIQINEDDKAKLASLTFKGNESVSSSTLQEQMELQPDSWWKLWGNKFEGAQFEKDLQSIRDYYLNNGYAKAQITKTDVQLNDEKTKVNVTIDVNEGLQYDLRSARIIGNLGGMSAELEPLLSALHLNDTFRRSDIADVENAIKAKLGERGYGSATVNSVPDFDDANKTLAITLVVDAGRRLTVRQLRFEGNTVSADSTLRQEMRQQEGTWYNSQLVELGKIRLDRTGFFETVENRIDPINGSNDEVDVVYKVKERNTGSINFGIGYGTESGISYQASVKQDNFLGTGAAVSIAGTKNDYGTSVNLGYTEPYFTKDGVSLGGNVFFENYDNSKSDTSSNYKRTTYGSNVTLGFPVNENNSYYVGLGHTYNKISNFALEYNRNLYIQSMKFKGNGIKTNDFDFSFGWNYNSLNRGYFPTKGVKASLGGRVTIPGSDNKYYKLSADVQGFYPLDRDHLWVVSAKASAGYANGFGNKRLPFYQTYTAGGIGSLRGFAYGSIGPNAIYAEYGNGSGTGTFKKISSDVIGGNAIATASAELIVPTPFVSDKSQNTVRTSLFVDAASVWNTKWKSDKNGLESDVLKRLPDYGKSSRIRASTGVGFQWQSPIGPLVFSYAKPIKKYENDDVEQFQFSIGGSF</sequence>
<name>BAMA1_HAEIF</name>
<keyword id="KW-0002">3D-structure</keyword>
<keyword id="KW-0998">Cell outer membrane</keyword>
<keyword id="KW-0472">Membrane</keyword>
<keyword id="KW-0677">Repeat</keyword>
<keyword id="KW-0732">Signal</keyword>
<keyword id="KW-0812">Transmembrane</keyword>
<keyword id="KW-1134">Transmembrane beta strand</keyword>
<comment type="function">
    <text evidence="1">Part of the outer membrane protein assembly complex, which is involved in assembly and insertion of beta-barrel proteins into the outer membrane.</text>
</comment>
<comment type="subunit">
    <text evidence="1">Part of the Bam complex.</text>
</comment>
<comment type="subcellular location">
    <subcellularLocation>
        <location evidence="1">Cell outer membrane</location>
    </subcellularLocation>
</comment>
<comment type="similarity">
    <text evidence="1">Belongs to the BamA family.</text>
</comment>
<proteinExistence type="evidence at protein level"/>
<organism>
    <name type="scientific">Haemophilus influenzae</name>
    <dbReference type="NCBI Taxonomy" id="727"/>
    <lineage>
        <taxon>Bacteria</taxon>
        <taxon>Pseudomonadati</taxon>
        <taxon>Pseudomonadota</taxon>
        <taxon>Gammaproteobacteria</taxon>
        <taxon>Pasteurellales</taxon>
        <taxon>Pasteurellaceae</taxon>
        <taxon>Haemophilus</taxon>
    </lineage>
</organism>
<gene>
    <name evidence="1" type="primary">bamA</name>
</gene>
<evidence type="ECO:0000255" key="1">
    <source>
        <dbReference type="HAMAP-Rule" id="MF_01430"/>
    </source>
</evidence>
<evidence type="ECO:0000255" key="2">
    <source>
        <dbReference type="PROSITE-ProRule" id="PRU01115"/>
    </source>
</evidence>
<evidence type="ECO:0007829" key="3">
    <source>
        <dbReference type="PDB" id="6IZT"/>
    </source>
</evidence>
<reference key="1">
    <citation type="journal article" date="1995" name="Gene">
        <title>The sequencing of the 80-kDa D15 protective surface antigen of Haemophilus influenzae.</title>
        <authorList>
            <person name="Flack F.S."/>
            <person name="Loosmore S."/>
            <person name="Chong P."/>
            <person name="Thomas W.R."/>
        </authorList>
    </citation>
    <scope>NUCLEOTIDE SEQUENCE [GENOMIC DNA]</scope>
    <source>
        <strain>Serotype B</strain>
    </source>
</reference>
<reference key="2">
    <citation type="journal article" date="1997" name="Infect. Immun.">
        <title>Outer membrane protein D15 is conserved among Haemophilus influenzae species and may represent a universal protective antigen against invasive disease.</title>
        <authorList>
            <person name="Loosmore S.M."/>
            <person name="Yang Y.P."/>
            <person name="Coleman D.C."/>
            <person name="Shortreed J.M."/>
            <person name="England D.M."/>
            <person name="Klein M.H."/>
        </authorList>
    </citation>
    <scope>NUCLEOTIDE SEQUENCE [GENOMIC DNA]</scope>
    <source>
        <strain>Eagan / Serotype B</strain>
        <strain>Minna / Serotype B</strain>
    </source>
</reference>
<protein>
    <recommendedName>
        <fullName evidence="1">Outer membrane protein assembly factor BamA</fullName>
    </recommendedName>
    <alternativeName>
        <fullName>80 kDa D15 antigen</fullName>
        <shortName>D-15-Ag</shortName>
    </alternativeName>
    <alternativeName>
        <fullName>Outer membrane protein D15</fullName>
    </alternativeName>
    <alternativeName>
        <fullName>Protective surface antigen D15</fullName>
    </alternativeName>
</protein>
<dbReference type="EMBL" id="U13961">
    <property type="protein sequence ID" value="AAA85645.1"/>
    <property type="molecule type" value="Genomic_DNA"/>
</dbReference>
<dbReference type="EMBL" id="U60832">
    <property type="protein sequence ID" value="AAB61974.1"/>
    <property type="molecule type" value="Genomic_DNA"/>
</dbReference>
<dbReference type="EMBL" id="U60833">
    <property type="protein sequence ID" value="AAB61976.1"/>
    <property type="molecule type" value="Genomic_DNA"/>
</dbReference>
<dbReference type="PIR" id="JC4078">
    <property type="entry name" value="JC4078"/>
</dbReference>
<dbReference type="RefSeq" id="WP_015701933.1">
    <property type="nucleotide sequence ID" value="NZ_VOFX01000001.1"/>
</dbReference>
<dbReference type="PDB" id="6IZS">
    <property type="method" value="X-ray"/>
    <property type="resolution" value="2.03 A"/>
    <property type="chains" value="A=260-344"/>
</dbReference>
<dbReference type="PDB" id="6IZT">
    <property type="method" value="X-ray"/>
    <property type="resolution" value="2.03 A"/>
    <property type="chains" value="A/B=173-418"/>
</dbReference>
<dbReference type="PDBsum" id="6IZS"/>
<dbReference type="PDBsum" id="6IZT"/>
<dbReference type="SMR" id="P46024"/>
<dbReference type="TCDB" id="1.B.33.1.2">
    <property type="family name" value="the outer membrane protein insertion porin (bam complex) (ompip) family"/>
</dbReference>
<dbReference type="GO" id="GO:1990063">
    <property type="term" value="C:Bam protein complex"/>
    <property type="evidence" value="ECO:0007669"/>
    <property type="project" value="TreeGrafter"/>
</dbReference>
<dbReference type="GO" id="GO:0043165">
    <property type="term" value="P:Gram-negative-bacterium-type cell outer membrane assembly"/>
    <property type="evidence" value="ECO:0007669"/>
    <property type="project" value="UniProtKB-UniRule"/>
</dbReference>
<dbReference type="GO" id="GO:0051205">
    <property type="term" value="P:protein insertion into membrane"/>
    <property type="evidence" value="ECO:0007669"/>
    <property type="project" value="UniProtKB-UniRule"/>
</dbReference>
<dbReference type="FunFam" id="2.40.160.50:FF:000001">
    <property type="entry name" value="Outer membrane protein assembly factor BamA"/>
    <property type="match status" value="1"/>
</dbReference>
<dbReference type="FunFam" id="3.10.20.310:FF:000001">
    <property type="entry name" value="Outer membrane protein assembly factor BamA"/>
    <property type="match status" value="1"/>
</dbReference>
<dbReference type="FunFam" id="3.10.20.310:FF:000024">
    <property type="entry name" value="Outer membrane protein assembly factor BamA"/>
    <property type="match status" value="1"/>
</dbReference>
<dbReference type="Gene3D" id="3.10.20.310">
    <property type="entry name" value="membrane protein fhac"/>
    <property type="match status" value="5"/>
</dbReference>
<dbReference type="Gene3D" id="2.40.160.50">
    <property type="entry name" value="membrane protein fhac: a member of the omp85/tpsb transporter family"/>
    <property type="match status" value="1"/>
</dbReference>
<dbReference type="HAMAP" id="MF_01430">
    <property type="entry name" value="OM_assembly_BamA"/>
    <property type="match status" value="1"/>
</dbReference>
<dbReference type="InterPro" id="IPR000184">
    <property type="entry name" value="Bac_surfAg_D15"/>
</dbReference>
<dbReference type="InterPro" id="IPR010827">
    <property type="entry name" value="BamA/TamA_POTRA"/>
</dbReference>
<dbReference type="InterPro" id="IPR039910">
    <property type="entry name" value="D15-like"/>
</dbReference>
<dbReference type="InterPro" id="IPR023707">
    <property type="entry name" value="OM_assembly_BamA"/>
</dbReference>
<dbReference type="InterPro" id="IPR034746">
    <property type="entry name" value="POTRA"/>
</dbReference>
<dbReference type="NCBIfam" id="TIGR03303">
    <property type="entry name" value="OM_YaeT"/>
    <property type="match status" value="1"/>
</dbReference>
<dbReference type="PANTHER" id="PTHR12815:SF23">
    <property type="entry name" value="OUTER MEMBRANE PROTEIN ASSEMBLY FACTOR BAMA"/>
    <property type="match status" value="1"/>
</dbReference>
<dbReference type="PANTHER" id="PTHR12815">
    <property type="entry name" value="SORTING AND ASSEMBLY MACHINERY SAMM50 PROTEIN FAMILY MEMBER"/>
    <property type="match status" value="1"/>
</dbReference>
<dbReference type="Pfam" id="PF01103">
    <property type="entry name" value="Omp85"/>
    <property type="match status" value="1"/>
</dbReference>
<dbReference type="Pfam" id="PF07244">
    <property type="entry name" value="POTRA"/>
    <property type="match status" value="4"/>
</dbReference>
<dbReference type="PIRSF" id="PIRSF006076">
    <property type="entry name" value="OM_assembly_OMP85"/>
    <property type="match status" value="1"/>
</dbReference>
<dbReference type="PROSITE" id="PS51779">
    <property type="entry name" value="POTRA"/>
    <property type="match status" value="5"/>
</dbReference>
<accession>P46024</accession>